<dbReference type="EMBL" id="GL532562">
    <property type="protein sequence ID" value="EFQ95728.1"/>
    <property type="molecule type" value="Genomic_DNA"/>
</dbReference>
<dbReference type="RefSeq" id="XP_003296176.1">
    <property type="nucleotide sequence ID" value="XM_003296128.1"/>
</dbReference>
<dbReference type="SMR" id="E3REX1"/>
<dbReference type="EnsemblFungi" id="EFQ95728">
    <property type="protein sequence ID" value="EFQ95728"/>
    <property type="gene ID" value="PTT_05273"/>
</dbReference>
<dbReference type="KEGG" id="pte:PTT_05273"/>
<dbReference type="eggNOG" id="ENOG502S7IA">
    <property type="taxonomic scope" value="Eukaryota"/>
</dbReference>
<dbReference type="HOGENOM" id="CLU_047598_1_0_1"/>
<dbReference type="OrthoDB" id="5578174at2759"/>
<dbReference type="Proteomes" id="UP000001067">
    <property type="component" value="Unassembled WGS sequence"/>
</dbReference>
<dbReference type="GO" id="GO:0005739">
    <property type="term" value="C:mitochondrion"/>
    <property type="evidence" value="ECO:0007669"/>
    <property type="project" value="UniProtKB-SubCell"/>
</dbReference>
<dbReference type="GO" id="GO:0005634">
    <property type="term" value="C:nucleus"/>
    <property type="evidence" value="ECO:0007669"/>
    <property type="project" value="TreeGrafter"/>
</dbReference>
<dbReference type="InterPro" id="IPR010487">
    <property type="entry name" value="NGRN/Rrg9"/>
</dbReference>
<dbReference type="PANTHER" id="PTHR13475">
    <property type="entry name" value="NEUGRIN"/>
    <property type="match status" value="1"/>
</dbReference>
<dbReference type="PANTHER" id="PTHR13475:SF3">
    <property type="entry name" value="NEUGRIN"/>
    <property type="match status" value="1"/>
</dbReference>
<dbReference type="Pfam" id="PF06413">
    <property type="entry name" value="Neugrin"/>
    <property type="match status" value="1"/>
</dbReference>
<feature type="transit peptide" description="Mitochondrion" evidence="2">
    <location>
        <begin position="1"/>
        <end position="39"/>
    </location>
</feature>
<feature type="chain" id="PRO_0000407963" description="Required for respiratory growth protein 9, mitochondrial">
    <location>
        <begin position="40"/>
        <end position="249"/>
    </location>
</feature>
<feature type="region of interest" description="Disordered" evidence="3">
    <location>
        <begin position="44"/>
        <end position="75"/>
    </location>
</feature>
<feature type="region of interest" description="Disordered" evidence="3">
    <location>
        <begin position="227"/>
        <end position="249"/>
    </location>
</feature>
<feature type="compositionally biased region" description="Basic and acidic residues" evidence="3">
    <location>
        <begin position="44"/>
        <end position="53"/>
    </location>
</feature>
<feature type="compositionally biased region" description="Polar residues" evidence="3">
    <location>
        <begin position="238"/>
        <end position="249"/>
    </location>
</feature>
<sequence>MSCHNCSRTALGLFIRSLTNLQPTFAARRPLIHPQPLRFLSDARRPRKVESVSRPDGVNPDTEIEDTLSGEGFPNKRERPAWAIQKEALKEKLGGEAWNPRKKLSPDTMEGIRHLNSTQPDKFTTPVLAEHFKVSPEAIRRILKSNWKPSDKEYEERMERWNKRGERIWSNLVEMGVKPPKRWRDMGVGRARDGNVPRWKSTERNLVDVKDSASSDFTNYIPDEDIIPTVGKDGKSKPITSSIPLSERL</sequence>
<proteinExistence type="inferred from homology"/>
<reference key="1">
    <citation type="journal article" date="2010" name="Genome Biol.">
        <title>A first genome assembly of the barley fungal pathogen Pyrenophora teres f. teres.</title>
        <authorList>
            <person name="Ellwood S.R."/>
            <person name="Liu Z."/>
            <person name="Syme R.A."/>
            <person name="Lai Z."/>
            <person name="Hane J.K."/>
            <person name="Keiper F."/>
            <person name="Moffat C.S."/>
            <person name="Oliver R.P."/>
            <person name="Friesen T.L."/>
        </authorList>
    </citation>
    <scope>NUCLEOTIDE SEQUENCE [LARGE SCALE GENOMIC DNA]</scope>
    <source>
        <strain>0-1</strain>
    </source>
</reference>
<keyword id="KW-0496">Mitochondrion</keyword>
<keyword id="KW-1185">Reference proteome</keyword>
<keyword id="KW-0809">Transit peptide</keyword>
<protein>
    <recommendedName>
        <fullName>Required for respiratory growth protein 9, mitochondrial</fullName>
    </recommendedName>
</protein>
<comment type="function">
    <text evidence="1">Required for respiratory activity and maintenance and expression of the mitochondrial genome.</text>
</comment>
<comment type="subcellular location">
    <subcellularLocation>
        <location evidence="1">Mitochondrion</location>
    </subcellularLocation>
</comment>
<comment type="similarity">
    <text evidence="4">Belongs to the RRG9 family.</text>
</comment>
<gene>
    <name type="primary">rrg9</name>
    <name type="ORF">PTT_05273</name>
</gene>
<name>RRG9_PYRTT</name>
<organism>
    <name type="scientific">Pyrenophora teres f. teres (strain 0-1)</name>
    <name type="common">Barley net blotch fungus</name>
    <name type="synonym">Drechslera teres f. teres</name>
    <dbReference type="NCBI Taxonomy" id="861557"/>
    <lineage>
        <taxon>Eukaryota</taxon>
        <taxon>Fungi</taxon>
        <taxon>Dikarya</taxon>
        <taxon>Ascomycota</taxon>
        <taxon>Pezizomycotina</taxon>
        <taxon>Dothideomycetes</taxon>
        <taxon>Pleosporomycetidae</taxon>
        <taxon>Pleosporales</taxon>
        <taxon>Pleosporineae</taxon>
        <taxon>Pleosporaceae</taxon>
        <taxon>Pyrenophora</taxon>
    </lineage>
</organism>
<evidence type="ECO:0000250" key="1"/>
<evidence type="ECO:0000255" key="2"/>
<evidence type="ECO:0000256" key="3">
    <source>
        <dbReference type="SAM" id="MobiDB-lite"/>
    </source>
</evidence>
<evidence type="ECO:0000305" key="4"/>
<accession>E3REX1</accession>